<evidence type="ECO:0000250" key="1">
    <source>
        <dbReference type="UniProtKB" id="Q55849"/>
    </source>
</evidence>
<evidence type="ECO:0000255" key="2">
    <source>
        <dbReference type="HAMAP-Rule" id="MF_00336"/>
    </source>
</evidence>
<evidence type="ECO:0000305" key="3"/>
<gene>
    <name evidence="2" type="primary">bioD</name>
    <name type="ordered locus">Cyan7425_1373</name>
</gene>
<accession>B8HNL6</accession>
<reference key="1">
    <citation type="journal article" date="2011" name="MBio">
        <title>Novel metabolic attributes of the genus Cyanothece, comprising a group of unicellular nitrogen-fixing Cyanobacteria.</title>
        <authorList>
            <person name="Bandyopadhyay A."/>
            <person name="Elvitigala T."/>
            <person name="Welsh E."/>
            <person name="Stockel J."/>
            <person name="Liberton M."/>
            <person name="Min H."/>
            <person name="Sherman L.A."/>
            <person name="Pakrasi H.B."/>
        </authorList>
    </citation>
    <scope>NUCLEOTIDE SEQUENCE [LARGE SCALE GENOMIC DNA]</scope>
    <source>
        <strain>PCC 7425 / ATCC 29141</strain>
    </source>
</reference>
<organism>
    <name type="scientific">Cyanothece sp. (strain PCC 7425 / ATCC 29141)</name>
    <dbReference type="NCBI Taxonomy" id="395961"/>
    <lineage>
        <taxon>Bacteria</taxon>
        <taxon>Bacillati</taxon>
        <taxon>Cyanobacteriota</taxon>
        <taxon>Cyanophyceae</taxon>
        <taxon>Gomontiellales</taxon>
        <taxon>Cyanothecaceae</taxon>
        <taxon>Cyanothece</taxon>
    </lineage>
</organism>
<feature type="chain" id="PRO_1000133213" description="ATP-dependent dethiobiotin synthetase BioD">
    <location>
        <begin position="1"/>
        <end position="226"/>
    </location>
</feature>
<feature type="active site" evidence="2">
    <location>
        <position position="39"/>
    </location>
</feature>
<feature type="binding site" evidence="2">
    <location>
        <begin position="12"/>
        <end position="17"/>
    </location>
    <ligand>
        <name>ATP</name>
        <dbReference type="ChEBI" id="CHEBI:30616"/>
    </ligand>
</feature>
<feature type="binding site" evidence="2">
    <location>
        <position position="16"/>
    </location>
    <ligand>
        <name>Mg(2+)</name>
        <dbReference type="ChEBI" id="CHEBI:18420"/>
    </ligand>
</feature>
<feature type="binding site" evidence="2">
    <location>
        <position position="43"/>
    </location>
    <ligand>
        <name>substrate</name>
    </ligand>
</feature>
<feature type="binding site" evidence="2">
    <location>
        <position position="47"/>
    </location>
    <ligand>
        <name>ATP</name>
        <dbReference type="ChEBI" id="CHEBI:30616"/>
    </ligand>
</feature>
<feature type="binding site" evidence="2">
    <location>
        <position position="47"/>
    </location>
    <ligand>
        <name>Mg(2+)</name>
        <dbReference type="ChEBI" id="CHEBI:18420"/>
    </ligand>
</feature>
<feature type="binding site" evidence="2">
    <location>
        <begin position="108"/>
        <end position="111"/>
    </location>
    <ligand>
        <name>ATP</name>
        <dbReference type="ChEBI" id="CHEBI:30616"/>
    </ligand>
</feature>
<feature type="binding site" evidence="2">
    <location>
        <position position="108"/>
    </location>
    <ligand>
        <name>Mg(2+)</name>
        <dbReference type="ChEBI" id="CHEBI:18420"/>
    </ligand>
</feature>
<feature type="binding site" evidence="2">
    <location>
        <begin position="168"/>
        <end position="169"/>
    </location>
    <ligand>
        <name>ATP</name>
        <dbReference type="ChEBI" id="CHEBI:30616"/>
    </ligand>
</feature>
<feature type="binding site" evidence="2">
    <location>
        <begin position="200"/>
        <end position="202"/>
    </location>
    <ligand>
        <name>ATP</name>
        <dbReference type="ChEBI" id="CHEBI:30616"/>
    </ligand>
</feature>
<feature type="binding site" evidence="2">
    <location>
        <position position="207"/>
    </location>
    <ligand>
        <name>ATP</name>
        <dbReference type="ChEBI" id="CHEBI:30616"/>
    </ligand>
</feature>
<proteinExistence type="inferred from homology"/>
<comment type="function">
    <text evidence="1 2">Catalyzes a mechanistically unusual reaction, the ATP-dependent insertion of CO2 between the N7 and N8 nitrogen atoms of 7,8-diaminopelargonic acid (DAPA, also called 7,8-diammoniononanoate) to form a ureido ring (By similarity). This cyanobacterium does not encode bioA (which catalyzes the formation of the precursor for this reaction in the cannonical pathway), instead it encodes bioU, which replaces bioA and also performs the first half of the cannonical BioD reaction. Thus in this organism BioD has a different substrate (By similarity).</text>
</comment>
<comment type="catalytic activity">
    <reaction evidence="2">
        <text>(7R,8S)-7,8-diammoniononanoate + CO2 + ATP = (4R,5S)-dethiobiotin + ADP + phosphate + 3 H(+)</text>
        <dbReference type="Rhea" id="RHEA:15805"/>
        <dbReference type="ChEBI" id="CHEBI:15378"/>
        <dbReference type="ChEBI" id="CHEBI:16526"/>
        <dbReference type="ChEBI" id="CHEBI:30616"/>
        <dbReference type="ChEBI" id="CHEBI:43474"/>
        <dbReference type="ChEBI" id="CHEBI:149469"/>
        <dbReference type="ChEBI" id="CHEBI:149473"/>
        <dbReference type="ChEBI" id="CHEBI:456216"/>
        <dbReference type="EC" id="6.3.3.3"/>
    </reaction>
</comment>
<comment type="catalytic activity">
    <reaction evidence="1 3">
        <text>(7R,8S)-8-amino-7-(carboxyamino)nonanoate + ATP = (4R,5S)-dethiobiotin + ADP + phosphate + H(+)</text>
        <dbReference type="Rhea" id="RHEA:63684"/>
        <dbReference type="ChEBI" id="CHEBI:15378"/>
        <dbReference type="ChEBI" id="CHEBI:30616"/>
        <dbReference type="ChEBI" id="CHEBI:43474"/>
        <dbReference type="ChEBI" id="CHEBI:149470"/>
        <dbReference type="ChEBI" id="CHEBI:149473"/>
        <dbReference type="ChEBI" id="CHEBI:456216"/>
    </reaction>
</comment>
<comment type="cofactor">
    <cofactor evidence="2">
        <name>Mg(2+)</name>
        <dbReference type="ChEBI" id="CHEBI:18420"/>
    </cofactor>
</comment>
<comment type="pathway">
    <text evidence="2">Cofactor biosynthesis; biotin biosynthesis; biotin from 7,8-diaminononanoate: step 1/2.</text>
</comment>
<comment type="subunit">
    <text evidence="2">Homodimer.</text>
</comment>
<comment type="subcellular location">
    <subcellularLocation>
        <location evidence="2">Cytoplasm</location>
    </subcellularLocation>
</comment>
<comment type="similarity">
    <text evidence="2">Belongs to the dethiobiotin synthetase family.</text>
</comment>
<sequence>MFTLLITGTDTDAGKTVLTTALAAYWRTYFPSQSVALLKPLQSGVGDRELYRELFALNQPPEEINPLYFQAPLAPPLAAELEQRSIDLSLPWQTLVKLRQSYDRVLVEGVGGLGSPITWELTVADLARDWGLATLLVVPVKLGAIGQAVANVALARQAGVNLKGIVLNCVQPRSETEIAQWAPADLITNLTQIPVLGVLPYLGDRTNLAQLAAAAAQLDLEAFLSA</sequence>
<dbReference type="EC" id="6.3.3.3" evidence="2"/>
<dbReference type="EMBL" id="CP001344">
    <property type="protein sequence ID" value="ACL43747.1"/>
    <property type="molecule type" value="Genomic_DNA"/>
</dbReference>
<dbReference type="SMR" id="B8HNL6"/>
<dbReference type="STRING" id="395961.Cyan7425_1373"/>
<dbReference type="KEGG" id="cyn:Cyan7425_1373"/>
<dbReference type="eggNOG" id="COG0132">
    <property type="taxonomic scope" value="Bacteria"/>
</dbReference>
<dbReference type="HOGENOM" id="CLU_072551_3_1_3"/>
<dbReference type="OrthoDB" id="9802097at2"/>
<dbReference type="UniPathway" id="UPA00078">
    <property type="reaction ID" value="UER00161"/>
</dbReference>
<dbReference type="GO" id="GO:0005829">
    <property type="term" value="C:cytosol"/>
    <property type="evidence" value="ECO:0007669"/>
    <property type="project" value="TreeGrafter"/>
</dbReference>
<dbReference type="GO" id="GO:0005524">
    <property type="term" value="F:ATP binding"/>
    <property type="evidence" value="ECO:0007669"/>
    <property type="project" value="UniProtKB-UniRule"/>
</dbReference>
<dbReference type="GO" id="GO:0004141">
    <property type="term" value="F:dethiobiotin synthase activity"/>
    <property type="evidence" value="ECO:0007669"/>
    <property type="project" value="UniProtKB-UniRule"/>
</dbReference>
<dbReference type="GO" id="GO:0000287">
    <property type="term" value="F:magnesium ion binding"/>
    <property type="evidence" value="ECO:0007669"/>
    <property type="project" value="UniProtKB-UniRule"/>
</dbReference>
<dbReference type="GO" id="GO:0009102">
    <property type="term" value="P:biotin biosynthetic process"/>
    <property type="evidence" value="ECO:0007669"/>
    <property type="project" value="UniProtKB-UniRule"/>
</dbReference>
<dbReference type="CDD" id="cd03109">
    <property type="entry name" value="DTBS"/>
    <property type="match status" value="1"/>
</dbReference>
<dbReference type="Gene3D" id="3.40.50.300">
    <property type="entry name" value="P-loop containing nucleotide triphosphate hydrolases"/>
    <property type="match status" value="1"/>
</dbReference>
<dbReference type="HAMAP" id="MF_00336">
    <property type="entry name" value="BioD"/>
    <property type="match status" value="1"/>
</dbReference>
<dbReference type="InterPro" id="IPR004472">
    <property type="entry name" value="DTB_synth_BioD"/>
</dbReference>
<dbReference type="InterPro" id="IPR027417">
    <property type="entry name" value="P-loop_NTPase"/>
</dbReference>
<dbReference type="NCBIfam" id="TIGR00347">
    <property type="entry name" value="bioD"/>
    <property type="match status" value="1"/>
</dbReference>
<dbReference type="PANTHER" id="PTHR43210:SF2">
    <property type="entry name" value="ATP-DEPENDENT DETHIOBIOTIN SYNTHETASE BIOD 2"/>
    <property type="match status" value="1"/>
</dbReference>
<dbReference type="PANTHER" id="PTHR43210">
    <property type="entry name" value="DETHIOBIOTIN SYNTHETASE"/>
    <property type="match status" value="1"/>
</dbReference>
<dbReference type="Pfam" id="PF13500">
    <property type="entry name" value="AAA_26"/>
    <property type="match status" value="1"/>
</dbReference>
<dbReference type="PIRSF" id="PIRSF006755">
    <property type="entry name" value="DTB_synth"/>
    <property type="match status" value="1"/>
</dbReference>
<dbReference type="SUPFAM" id="SSF52540">
    <property type="entry name" value="P-loop containing nucleoside triphosphate hydrolases"/>
    <property type="match status" value="1"/>
</dbReference>
<keyword id="KW-0067">ATP-binding</keyword>
<keyword id="KW-0093">Biotin biosynthesis</keyword>
<keyword id="KW-0963">Cytoplasm</keyword>
<keyword id="KW-0436">Ligase</keyword>
<keyword id="KW-0460">Magnesium</keyword>
<keyword id="KW-0479">Metal-binding</keyword>
<keyword id="KW-0547">Nucleotide-binding</keyword>
<protein>
    <recommendedName>
        <fullName evidence="2">ATP-dependent dethiobiotin synthetase BioD</fullName>
        <ecNumber evidence="2">6.3.3.3</ecNumber>
    </recommendedName>
    <alternativeName>
        <fullName evidence="2">DTB synthetase</fullName>
        <shortName evidence="2">DTBS</shortName>
    </alternativeName>
    <alternativeName>
        <fullName evidence="2">Dethiobiotin synthase</fullName>
    </alternativeName>
</protein>
<name>BIOD_CYAP4</name>